<accession>B7V1R6</accession>
<comment type="catalytic activity">
    <reaction evidence="1">
        <text>(6R)-10-formyltetrahydrofolate + 5-amino-1-(5-phospho-beta-D-ribosyl)imidazole-4-carboxamide = 5-formamido-1-(5-phospho-D-ribosyl)imidazole-4-carboxamide + (6S)-5,6,7,8-tetrahydrofolate</text>
        <dbReference type="Rhea" id="RHEA:22192"/>
        <dbReference type="ChEBI" id="CHEBI:57453"/>
        <dbReference type="ChEBI" id="CHEBI:58467"/>
        <dbReference type="ChEBI" id="CHEBI:58475"/>
        <dbReference type="ChEBI" id="CHEBI:195366"/>
        <dbReference type="EC" id="2.1.2.3"/>
    </reaction>
</comment>
<comment type="catalytic activity">
    <reaction evidence="1">
        <text>IMP + H2O = 5-formamido-1-(5-phospho-D-ribosyl)imidazole-4-carboxamide</text>
        <dbReference type="Rhea" id="RHEA:18445"/>
        <dbReference type="ChEBI" id="CHEBI:15377"/>
        <dbReference type="ChEBI" id="CHEBI:58053"/>
        <dbReference type="ChEBI" id="CHEBI:58467"/>
        <dbReference type="EC" id="3.5.4.10"/>
    </reaction>
</comment>
<comment type="pathway">
    <text evidence="1">Purine metabolism; IMP biosynthesis via de novo pathway; 5-formamido-1-(5-phospho-D-ribosyl)imidazole-4-carboxamide from 5-amino-1-(5-phospho-D-ribosyl)imidazole-4-carboxamide (10-formyl THF route): step 1/1.</text>
</comment>
<comment type="pathway">
    <text evidence="1">Purine metabolism; IMP biosynthesis via de novo pathway; IMP from 5-formamido-1-(5-phospho-D-ribosyl)imidazole-4-carboxamide: step 1/1.</text>
</comment>
<comment type="domain">
    <text evidence="1">The IMP cyclohydrolase activity resides in the N-terminal region.</text>
</comment>
<comment type="similarity">
    <text evidence="1">Belongs to the PurH family.</text>
</comment>
<feature type="chain" id="PRO_1000192979" description="Bifunctional purine biosynthesis protein PurH">
    <location>
        <begin position="1"/>
        <end position="535"/>
    </location>
</feature>
<feature type="domain" description="MGS-like" evidence="2">
    <location>
        <begin position="6"/>
        <end position="151"/>
    </location>
</feature>
<reference key="1">
    <citation type="journal article" date="2009" name="Genome Res.">
        <title>Newly introduced genomic prophage islands are critical determinants of in vivo competitiveness in the Liverpool epidemic strain of Pseudomonas aeruginosa.</title>
        <authorList>
            <person name="Winstanley C."/>
            <person name="Langille M.G.I."/>
            <person name="Fothergill J.L."/>
            <person name="Kukavica-Ibrulj I."/>
            <person name="Paradis-Bleau C."/>
            <person name="Sanschagrin F."/>
            <person name="Thomson N.R."/>
            <person name="Winsor G.L."/>
            <person name="Quail M.A."/>
            <person name="Lennard N."/>
            <person name="Bignell A."/>
            <person name="Clarke L."/>
            <person name="Seeger K."/>
            <person name="Saunders D."/>
            <person name="Harris D."/>
            <person name="Parkhill J."/>
            <person name="Hancock R.E.W."/>
            <person name="Brinkman F.S.L."/>
            <person name="Levesque R.C."/>
        </authorList>
    </citation>
    <scope>NUCLEOTIDE SEQUENCE [LARGE SCALE GENOMIC DNA]</scope>
    <source>
        <strain>LESB58</strain>
    </source>
</reference>
<proteinExistence type="inferred from homology"/>
<sequence>MTDQTTRLPIRRALISVSDKTGVVDFARELVALGVEILSTGGTYKLLRDNGISAVEVADYTGFPEMMDGRVKTLHPKVHGGILGRRDLDGAVMEQHGIKPIDLVAVNLYPFEATVARPDCDLPTAIENIDIGGPTMVRSAAKNHKDVAIVVNAGDYAAVIESLKAGGLTYAQRFDLALKAFEHTSAYDGMIANYLGTIDQTRDTLGTADRGAFPRTFNSQFVKAQEMRYGENPHQSAAFYVEAKKGEASVSTAIQLQGKELSFNNVADTDAALECVKSFLKPACVIVKHANPCGVAVVPEDEGGIRKAYDLAYATDSESAFGGIIAFNRELDGETAKAIVERQFVEVIIAPKISAAAREVVAAKANVRLLECGEWPAERAPGWDFKRVNGGLLVQSRDIGMIKAEDLKIVTRRAPTEQEIHDLIFAWKVAKFVKSNAIVYARNRQTVGVGAGQMSRVNSARIAAIKAEHAGLEVKGAVMASDAFFPFRDGIDNAAKAGITAVIQPGGSMRDNEVIAAADEADIAMVFTGMRHFRH</sequence>
<gene>
    <name evidence="1" type="primary">purH</name>
    <name type="ordered locus">PLES_52391</name>
</gene>
<evidence type="ECO:0000255" key="1">
    <source>
        <dbReference type="HAMAP-Rule" id="MF_00139"/>
    </source>
</evidence>
<evidence type="ECO:0000255" key="2">
    <source>
        <dbReference type="PROSITE-ProRule" id="PRU01202"/>
    </source>
</evidence>
<organism>
    <name type="scientific">Pseudomonas aeruginosa (strain LESB58)</name>
    <dbReference type="NCBI Taxonomy" id="557722"/>
    <lineage>
        <taxon>Bacteria</taxon>
        <taxon>Pseudomonadati</taxon>
        <taxon>Pseudomonadota</taxon>
        <taxon>Gammaproteobacteria</taxon>
        <taxon>Pseudomonadales</taxon>
        <taxon>Pseudomonadaceae</taxon>
        <taxon>Pseudomonas</taxon>
    </lineage>
</organism>
<name>PUR9_PSEA8</name>
<protein>
    <recommendedName>
        <fullName evidence="1">Bifunctional purine biosynthesis protein PurH</fullName>
    </recommendedName>
    <domain>
        <recommendedName>
            <fullName evidence="1">Phosphoribosylaminoimidazolecarboxamide formyltransferase</fullName>
            <ecNumber evidence="1">2.1.2.3</ecNumber>
        </recommendedName>
        <alternativeName>
            <fullName evidence="1">AICAR transformylase</fullName>
        </alternativeName>
    </domain>
    <domain>
        <recommendedName>
            <fullName evidence="1">IMP cyclohydrolase</fullName>
            <ecNumber evidence="1">3.5.4.10</ecNumber>
        </recommendedName>
        <alternativeName>
            <fullName evidence="1">ATIC</fullName>
        </alternativeName>
        <alternativeName>
            <fullName evidence="1">IMP synthase</fullName>
        </alternativeName>
        <alternativeName>
            <fullName evidence="1">Inosinicase</fullName>
        </alternativeName>
    </domain>
</protein>
<dbReference type="EC" id="2.1.2.3" evidence="1"/>
<dbReference type="EC" id="3.5.4.10" evidence="1"/>
<dbReference type="EMBL" id="FM209186">
    <property type="protein sequence ID" value="CAW29993.1"/>
    <property type="molecule type" value="Genomic_DNA"/>
</dbReference>
<dbReference type="RefSeq" id="WP_003105151.1">
    <property type="nucleotide sequence ID" value="NC_011770.1"/>
</dbReference>
<dbReference type="SMR" id="B7V1R6"/>
<dbReference type="KEGG" id="pag:PLES_52391"/>
<dbReference type="HOGENOM" id="CLU_016316_5_2_6"/>
<dbReference type="UniPathway" id="UPA00074">
    <property type="reaction ID" value="UER00133"/>
</dbReference>
<dbReference type="UniPathway" id="UPA00074">
    <property type="reaction ID" value="UER00135"/>
</dbReference>
<dbReference type="GO" id="GO:0005829">
    <property type="term" value="C:cytosol"/>
    <property type="evidence" value="ECO:0007669"/>
    <property type="project" value="TreeGrafter"/>
</dbReference>
<dbReference type="GO" id="GO:0003937">
    <property type="term" value="F:IMP cyclohydrolase activity"/>
    <property type="evidence" value="ECO:0007669"/>
    <property type="project" value="UniProtKB-UniRule"/>
</dbReference>
<dbReference type="GO" id="GO:0004643">
    <property type="term" value="F:phosphoribosylaminoimidazolecarboxamide formyltransferase activity"/>
    <property type="evidence" value="ECO:0007669"/>
    <property type="project" value="UniProtKB-UniRule"/>
</dbReference>
<dbReference type="GO" id="GO:0006189">
    <property type="term" value="P:'de novo' IMP biosynthetic process"/>
    <property type="evidence" value="ECO:0007669"/>
    <property type="project" value="UniProtKB-UniRule"/>
</dbReference>
<dbReference type="CDD" id="cd01421">
    <property type="entry name" value="IMPCH"/>
    <property type="match status" value="1"/>
</dbReference>
<dbReference type="FunFam" id="3.40.140.20:FF:000001">
    <property type="entry name" value="Bifunctional purine biosynthesis protein PurH"/>
    <property type="match status" value="1"/>
</dbReference>
<dbReference type="FunFam" id="3.40.140.20:FF:000002">
    <property type="entry name" value="Bifunctional purine biosynthesis protein PurH"/>
    <property type="match status" value="1"/>
</dbReference>
<dbReference type="FunFam" id="3.40.50.1380:FF:000001">
    <property type="entry name" value="Bifunctional purine biosynthesis protein PurH"/>
    <property type="match status" value="1"/>
</dbReference>
<dbReference type="Gene3D" id="3.40.140.20">
    <property type="match status" value="2"/>
</dbReference>
<dbReference type="Gene3D" id="3.40.50.1380">
    <property type="entry name" value="Methylglyoxal synthase-like domain"/>
    <property type="match status" value="1"/>
</dbReference>
<dbReference type="HAMAP" id="MF_00139">
    <property type="entry name" value="PurH"/>
    <property type="match status" value="1"/>
</dbReference>
<dbReference type="InterPro" id="IPR024051">
    <property type="entry name" value="AICAR_Tfase_dup_dom_sf"/>
</dbReference>
<dbReference type="InterPro" id="IPR016193">
    <property type="entry name" value="Cytidine_deaminase-like"/>
</dbReference>
<dbReference type="InterPro" id="IPR011607">
    <property type="entry name" value="MGS-like_dom"/>
</dbReference>
<dbReference type="InterPro" id="IPR036914">
    <property type="entry name" value="MGS-like_dom_sf"/>
</dbReference>
<dbReference type="InterPro" id="IPR002695">
    <property type="entry name" value="PurH-like"/>
</dbReference>
<dbReference type="NCBIfam" id="NF002049">
    <property type="entry name" value="PRK00881.1"/>
    <property type="match status" value="1"/>
</dbReference>
<dbReference type="NCBIfam" id="TIGR00355">
    <property type="entry name" value="purH"/>
    <property type="match status" value="1"/>
</dbReference>
<dbReference type="PANTHER" id="PTHR11692:SF0">
    <property type="entry name" value="BIFUNCTIONAL PURINE BIOSYNTHESIS PROTEIN ATIC"/>
    <property type="match status" value="1"/>
</dbReference>
<dbReference type="PANTHER" id="PTHR11692">
    <property type="entry name" value="BIFUNCTIONAL PURINE BIOSYNTHESIS PROTEIN PURH"/>
    <property type="match status" value="1"/>
</dbReference>
<dbReference type="Pfam" id="PF01808">
    <property type="entry name" value="AICARFT_IMPCHas"/>
    <property type="match status" value="1"/>
</dbReference>
<dbReference type="Pfam" id="PF02142">
    <property type="entry name" value="MGS"/>
    <property type="match status" value="1"/>
</dbReference>
<dbReference type="PIRSF" id="PIRSF000414">
    <property type="entry name" value="AICARFT_IMPCHas"/>
    <property type="match status" value="1"/>
</dbReference>
<dbReference type="SMART" id="SM00798">
    <property type="entry name" value="AICARFT_IMPCHas"/>
    <property type="match status" value="1"/>
</dbReference>
<dbReference type="SMART" id="SM00851">
    <property type="entry name" value="MGS"/>
    <property type="match status" value="1"/>
</dbReference>
<dbReference type="SUPFAM" id="SSF53927">
    <property type="entry name" value="Cytidine deaminase-like"/>
    <property type="match status" value="1"/>
</dbReference>
<dbReference type="SUPFAM" id="SSF52335">
    <property type="entry name" value="Methylglyoxal synthase-like"/>
    <property type="match status" value="1"/>
</dbReference>
<dbReference type="PROSITE" id="PS51855">
    <property type="entry name" value="MGS"/>
    <property type="match status" value="1"/>
</dbReference>
<keyword id="KW-0378">Hydrolase</keyword>
<keyword id="KW-0511">Multifunctional enzyme</keyword>
<keyword id="KW-0658">Purine biosynthesis</keyword>
<keyword id="KW-0808">Transferase</keyword>